<accession>B2S666</accession>
<name>RS14_BRUA1</name>
<organism>
    <name type="scientific">Brucella abortus (strain S19)</name>
    <dbReference type="NCBI Taxonomy" id="430066"/>
    <lineage>
        <taxon>Bacteria</taxon>
        <taxon>Pseudomonadati</taxon>
        <taxon>Pseudomonadota</taxon>
        <taxon>Alphaproteobacteria</taxon>
        <taxon>Hyphomicrobiales</taxon>
        <taxon>Brucellaceae</taxon>
        <taxon>Brucella/Ochrobactrum group</taxon>
        <taxon>Brucella</taxon>
    </lineage>
</organism>
<dbReference type="EMBL" id="CP000887">
    <property type="protein sequence ID" value="ACD72663.1"/>
    <property type="molecule type" value="Genomic_DNA"/>
</dbReference>
<dbReference type="RefSeq" id="WP_002964349.1">
    <property type="nucleotide sequence ID" value="NC_010742.1"/>
</dbReference>
<dbReference type="SMR" id="B2S666"/>
<dbReference type="GeneID" id="97533537"/>
<dbReference type="KEGG" id="bmc:BAbS19_I11580"/>
<dbReference type="HOGENOM" id="CLU_139869_0_1_5"/>
<dbReference type="Proteomes" id="UP000002565">
    <property type="component" value="Chromosome 1"/>
</dbReference>
<dbReference type="GO" id="GO:0005737">
    <property type="term" value="C:cytoplasm"/>
    <property type="evidence" value="ECO:0007669"/>
    <property type="project" value="UniProtKB-ARBA"/>
</dbReference>
<dbReference type="GO" id="GO:0015935">
    <property type="term" value="C:small ribosomal subunit"/>
    <property type="evidence" value="ECO:0007669"/>
    <property type="project" value="TreeGrafter"/>
</dbReference>
<dbReference type="GO" id="GO:0019843">
    <property type="term" value="F:rRNA binding"/>
    <property type="evidence" value="ECO:0007669"/>
    <property type="project" value="UniProtKB-UniRule"/>
</dbReference>
<dbReference type="GO" id="GO:0003735">
    <property type="term" value="F:structural constituent of ribosome"/>
    <property type="evidence" value="ECO:0007669"/>
    <property type="project" value="InterPro"/>
</dbReference>
<dbReference type="GO" id="GO:0006412">
    <property type="term" value="P:translation"/>
    <property type="evidence" value="ECO:0007669"/>
    <property type="project" value="UniProtKB-UniRule"/>
</dbReference>
<dbReference type="FunFam" id="1.10.287.1480:FF:000001">
    <property type="entry name" value="30S ribosomal protein S14"/>
    <property type="match status" value="1"/>
</dbReference>
<dbReference type="Gene3D" id="1.10.287.1480">
    <property type="match status" value="1"/>
</dbReference>
<dbReference type="HAMAP" id="MF_00537">
    <property type="entry name" value="Ribosomal_uS14_1"/>
    <property type="match status" value="1"/>
</dbReference>
<dbReference type="InterPro" id="IPR001209">
    <property type="entry name" value="Ribosomal_uS14"/>
</dbReference>
<dbReference type="InterPro" id="IPR023036">
    <property type="entry name" value="Ribosomal_uS14_bac/plastid"/>
</dbReference>
<dbReference type="InterPro" id="IPR018271">
    <property type="entry name" value="Ribosomal_uS14_CS"/>
</dbReference>
<dbReference type="NCBIfam" id="NF006477">
    <property type="entry name" value="PRK08881.1"/>
    <property type="match status" value="1"/>
</dbReference>
<dbReference type="PANTHER" id="PTHR19836">
    <property type="entry name" value="30S RIBOSOMAL PROTEIN S14"/>
    <property type="match status" value="1"/>
</dbReference>
<dbReference type="PANTHER" id="PTHR19836:SF19">
    <property type="entry name" value="SMALL RIBOSOMAL SUBUNIT PROTEIN US14M"/>
    <property type="match status" value="1"/>
</dbReference>
<dbReference type="Pfam" id="PF00253">
    <property type="entry name" value="Ribosomal_S14"/>
    <property type="match status" value="1"/>
</dbReference>
<dbReference type="SUPFAM" id="SSF57716">
    <property type="entry name" value="Glucocorticoid receptor-like (DNA-binding domain)"/>
    <property type="match status" value="1"/>
</dbReference>
<dbReference type="PROSITE" id="PS00527">
    <property type="entry name" value="RIBOSOMAL_S14"/>
    <property type="match status" value="1"/>
</dbReference>
<protein>
    <recommendedName>
        <fullName evidence="1">Small ribosomal subunit protein uS14</fullName>
    </recommendedName>
    <alternativeName>
        <fullName evidence="2">30S ribosomal protein S14</fullName>
    </alternativeName>
</protein>
<evidence type="ECO:0000255" key="1">
    <source>
        <dbReference type="HAMAP-Rule" id="MF_00537"/>
    </source>
</evidence>
<evidence type="ECO:0000305" key="2"/>
<reference key="1">
    <citation type="journal article" date="2008" name="PLoS ONE">
        <title>Genome sequence of Brucella abortus vaccine strain S19 compared to virulent strains yields candidate virulence genes.</title>
        <authorList>
            <person name="Crasta O.R."/>
            <person name="Folkerts O."/>
            <person name="Fei Z."/>
            <person name="Mane S.P."/>
            <person name="Evans C."/>
            <person name="Martino-Catt S."/>
            <person name="Bricker B."/>
            <person name="Yu G."/>
            <person name="Du L."/>
            <person name="Sobral B.W."/>
        </authorList>
    </citation>
    <scope>NUCLEOTIDE SEQUENCE [LARGE SCALE GENOMIC DNA]</scope>
    <source>
        <strain>S19</strain>
    </source>
</reference>
<feature type="chain" id="PRO_1000128319" description="Small ribosomal subunit protein uS14">
    <location>
        <begin position="1"/>
        <end position="101"/>
    </location>
</feature>
<sequence>MAKTSAVEKNKRREKLVKRHAVKRARLKAIVMDQGLPLEERFRATIRLAELPRNSAKVRIRNRCEVSGRPRGYYRKLKMSRIALRQLGSLGQIPGVVKSSW</sequence>
<comment type="function">
    <text evidence="1">Binds 16S rRNA, required for the assembly of 30S particles and may also be responsible for determining the conformation of the 16S rRNA at the A site.</text>
</comment>
<comment type="subunit">
    <text evidence="1">Part of the 30S ribosomal subunit. Contacts proteins S3 and S10.</text>
</comment>
<comment type="similarity">
    <text evidence="1">Belongs to the universal ribosomal protein uS14 family.</text>
</comment>
<keyword id="KW-0687">Ribonucleoprotein</keyword>
<keyword id="KW-0689">Ribosomal protein</keyword>
<keyword id="KW-0694">RNA-binding</keyword>
<keyword id="KW-0699">rRNA-binding</keyword>
<proteinExistence type="inferred from homology"/>
<gene>
    <name evidence="1" type="primary">rpsN</name>
    <name type="ordered locus">BAbS19_I11580</name>
</gene>